<evidence type="ECO:0000269" key="1">
    <source>
    </source>
</evidence>
<evidence type="ECO:0000269" key="2">
    <source>
    </source>
</evidence>
<evidence type="ECO:0000269" key="3">
    <source>
    </source>
</evidence>
<evidence type="ECO:0000269" key="4">
    <source>
    </source>
</evidence>
<evidence type="ECO:0000269" key="5">
    <source>
    </source>
</evidence>
<evidence type="ECO:0000269" key="6">
    <source>
    </source>
</evidence>
<evidence type="ECO:0000269" key="7">
    <source>
    </source>
</evidence>
<evidence type="ECO:0000269" key="8">
    <source>
    </source>
</evidence>
<evidence type="ECO:0000303" key="9">
    <source>
    </source>
</evidence>
<evidence type="ECO:0000303" key="10">
    <source>
    </source>
</evidence>
<evidence type="ECO:0000305" key="11"/>
<evidence type="ECO:0007829" key="12">
    <source>
        <dbReference type="PDB" id="2RQL"/>
    </source>
</evidence>
<protein>
    <recommendedName>
        <fullName evidence="9">Ribosome hibernation promoting factor</fullName>
        <shortName evidence="9">HPF</shortName>
    </recommendedName>
    <alternativeName>
        <fullName evidence="10">Hibernation factor HPF</fullName>
    </alternativeName>
</protein>
<organism>
    <name type="scientific">Escherichia coli (strain K12)</name>
    <dbReference type="NCBI Taxonomy" id="83333"/>
    <lineage>
        <taxon>Bacteria</taxon>
        <taxon>Pseudomonadati</taxon>
        <taxon>Pseudomonadota</taxon>
        <taxon>Gammaproteobacteria</taxon>
        <taxon>Enterobacterales</taxon>
        <taxon>Enterobacteriaceae</taxon>
        <taxon>Escherichia</taxon>
    </lineage>
</organism>
<dbReference type="EMBL" id="D12938">
    <property type="protein sequence ID" value="BAA02316.1"/>
    <property type="molecule type" value="Genomic_DNA"/>
</dbReference>
<dbReference type="EMBL" id="Z27094">
    <property type="protein sequence ID" value="CAA81618.1"/>
    <property type="molecule type" value="Genomic_DNA"/>
</dbReference>
<dbReference type="EMBL" id="U12684">
    <property type="protein sequence ID" value="AAB60164.1"/>
    <property type="molecule type" value="Genomic_DNA"/>
</dbReference>
<dbReference type="EMBL" id="U18997">
    <property type="protein sequence ID" value="AAA58005.1"/>
    <property type="molecule type" value="Genomic_DNA"/>
</dbReference>
<dbReference type="EMBL" id="U00096">
    <property type="protein sequence ID" value="AAC76235.1"/>
    <property type="molecule type" value="Genomic_DNA"/>
</dbReference>
<dbReference type="EMBL" id="AP009048">
    <property type="protein sequence ID" value="BAE77247.1"/>
    <property type="molecule type" value="Genomic_DNA"/>
</dbReference>
<dbReference type="PIR" id="I76719">
    <property type="entry name" value="I76719"/>
</dbReference>
<dbReference type="RefSeq" id="NP_417670.1">
    <property type="nucleotide sequence ID" value="NC_000913.3"/>
</dbReference>
<dbReference type="RefSeq" id="WP_001176599.1">
    <property type="nucleotide sequence ID" value="NZ_STEB01000012.1"/>
</dbReference>
<dbReference type="PDB" id="2RQL">
    <property type="method" value="NMR"/>
    <property type="chains" value="A=1-95"/>
</dbReference>
<dbReference type="PDB" id="4V8H">
    <property type="method" value="X-ray"/>
    <property type="resolution" value="3.10 A"/>
    <property type="chains" value="AX/CX=1-95"/>
</dbReference>
<dbReference type="PDB" id="6H4N">
    <property type="method" value="EM"/>
    <property type="resolution" value="3.00 A"/>
    <property type="chains" value="x=1-95"/>
</dbReference>
<dbReference type="PDB" id="6H58">
    <property type="method" value="EM"/>
    <property type="resolution" value="7.90 A"/>
    <property type="chains" value="x/xx=1-95"/>
</dbReference>
<dbReference type="PDB" id="6Y69">
    <property type="method" value="EM"/>
    <property type="resolution" value="2.86 A"/>
    <property type="chains" value="x=1-95"/>
</dbReference>
<dbReference type="PDBsum" id="2RQL"/>
<dbReference type="PDBsum" id="4V8H"/>
<dbReference type="PDBsum" id="6H4N"/>
<dbReference type="PDBsum" id="6H58"/>
<dbReference type="PDBsum" id="6Y69"/>
<dbReference type="BMRB" id="P0AFX0"/>
<dbReference type="EMDB" id="EMD-0137"/>
<dbReference type="EMDB" id="EMD-0139"/>
<dbReference type="EMDB" id="EMD-10705"/>
<dbReference type="SMR" id="P0AFX0"/>
<dbReference type="BioGRID" id="4259283">
    <property type="interactions" value="31"/>
</dbReference>
<dbReference type="DIP" id="DIP-48273N"/>
<dbReference type="FunCoup" id="P0AFX0">
    <property type="interactions" value="329"/>
</dbReference>
<dbReference type="IntAct" id="P0AFX0">
    <property type="interactions" value="55"/>
</dbReference>
<dbReference type="STRING" id="511145.b3203"/>
<dbReference type="jPOST" id="P0AFX0"/>
<dbReference type="PaxDb" id="511145-b3203"/>
<dbReference type="EnsemblBacteria" id="AAC76235">
    <property type="protein sequence ID" value="AAC76235"/>
    <property type="gene ID" value="b3203"/>
</dbReference>
<dbReference type="GeneID" id="93778778"/>
<dbReference type="GeneID" id="947718"/>
<dbReference type="KEGG" id="ecj:JW3170"/>
<dbReference type="KEGG" id="eco:b3203"/>
<dbReference type="KEGG" id="ecoc:C3026_17430"/>
<dbReference type="PATRIC" id="fig|1411691.4.peg.3528"/>
<dbReference type="EchoBASE" id="EB1632"/>
<dbReference type="eggNOG" id="COG1544">
    <property type="taxonomic scope" value="Bacteria"/>
</dbReference>
<dbReference type="HOGENOM" id="CLU_071472_3_1_6"/>
<dbReference type="InParanoid" id="P0AFX0"/>
<dbReference type="OMA" id="NLTGHHI"/>
<dbReference type="OrthoDB" id="9795980at2"/>
<dbReference type="PhylomeDB" id="P0AFX0"/>
<dbReference type="BioCyc" id="EcoCyc:EG11681-MONOMER"/>
<dbReference type="EvolutionaryTrace" id="P0AFX0"/>
<dbReference type="PRO" id="PR:P0AFX0"/>
<dbReference type="Proteomes" id="UP000000625">
    <property type="component" value="Chromosome"/>
</dbReference>
<dbReference type="GO" id="GO:0005829">
    <property type="term" value="C:cytosol"/>
    <property type="evidence" value="ECO:0000314"/>
    <property type="project" value="EcoCyc"/>
</dbReference>
<dbReference type="GO" id="GO:0022627">
    <property type="term" value="C:cytosolic small ribosomal subunit"/>
    <property type="evidence" value="ECO:0000318"/>
    <property type="project" value="GO_Central"/>
</dbReference>
<dbReference type="GO" id="GO:0043024">
    <property type="term" value="F:ribosomal small subunit binding"/>
    <property type="evidence" value="ECO:0000314"/>
    <property type="project" value="EcoCyc"/>
</dbReference>
<dbReference type="GO" id="GO:0043022">
    <property type="term" value="F:ribosome binding"/>
    <property type="evidence" value="ECO:0000314"/>
    <property type="project" value="EcoCyc"/>
</dbReference>
<dbReference type="GO" id="GO:0022611">
    <property type="term" value="P:dormancy process"/>
    <property type="evidence" value="ECO:0000315"/>
    <property type="project" value="EcoCyc"/>
</dbReference>
<dbReference type="GO" id="GO:0017148">
    <property type="term" value="P:negative regulation of translation"/>
    <property type="evidence" value="ECO:0000314"/>
    <property type="project" value="EcoCyc"/>
</dbReference>
<dbReference type="GO" id="GO:0045900">
    <property type="term" value="P:negative regulation of translational elongation"/>
    <property type="evidence" value="ECO:0000318"/>
    <property type="project" value="GO_Central"/>
</dbReference>
<dbReference type="CDD" id="cd00552">
    <property type="entry name" value="RaiA"/>
    <property type="match status" value="1"/>
</dbReference>
<dbReference type="FunFam" id="3.30.160.100:FF:000001">
    <property type="entry name" value="Ribosome hibernation promoting factor"/>
    <property type="match status" value="1"/>
</dbReference>
<dbReference type="Gene3D" id="3.30.160.100">
    <property type="entry name" value="Ribosome hibernation promotion factor-like"/>
    <property type="match status" value="1"/>
</dbReference>
<dbReference type="InterPro" id="IPR050574">
    <property type="entry name" value="HPF/YfiA_ribosome-assoc"/>
</dbReference>
<dbReference type="InterPro" id="IPR036567">
    <property type="entry name" value="RHF-like"/>
</dbReference>
<dbReference type="InterPro" id="IPR003489">
    <property type="entry name" value="RHF/RaiA"/>
</dbReference>
<dbReference type="NCBIfam" id="NF007780">
    <property type="entry name" value="PRK10470.1"/>
    <property type="match status" value="1"/>
</dbReference>
<dbReference type="NCBIfam" id="TIGR00741">
    <property type="entry name" value="yfiA"/>
    <property type="match status" value="1"/>
</dbReference>
<dbReference type="PANTHER" id="PTHR33231">
    <property type="entry name" value="30S RIBOSOMAL PROTEIN"/>
    <property type="match status" value="1"/>
</dbReference>
<dbReference type="PANTHER" id="PTHR33231:SF1">
    <property type="entry name" value="30S RIBOSOMAL PROTEIN"/>
    <property type="match status" value="1"/>
</dbReference>
<dbReference type="Pfam" id="PF02482">
    <property type="entry name" value="Ribosomal_S30AE"/>
    <property type="match status" value="1"/>
</dbReference>
<dbReference type="SUPFAM" id="SSF69754">
    <property type="entry name" value="Ribosome binding protein Y (YfiA homologue)"/>
    <property type="match status" value="1"/>
</dbReference>
<gene>
    <name evidence="9" type="primary">hpf</name>
    <name type="synonym">yhbH</name>
    <name type="ordered locus">b3203</name>
    <name type="ordered locus">JW3170</name>
</gene>
<name>HPF_ECOLI</name>
<keyword id="KW-0002">3D-structure</keyword>
<keyword id="KW-0903">Direct protein sequencing</keyword>
<keyword id="KW-1185">Reference proteome</keyword>
<keyword id="KW-0810">Translation regulation</keyword>
<accession>P0AFX0</accession>
<accession>P31221</accession>
<accession>Q2M909</accession>
<proteinExistence type="evidence at protein level"/>
<feature type="chain" id="PRO_0000097417" description="Ribosome hibernation promoting factor">
    <location>
        <begin position="1"/>
        <end position="95"/>
    </location>
</feature>
<feature type="strand" evidence="12">
    <location>
        <begin position="2"/>
        <end position="10"/>
    </location>
</feature>
<feature type="helix" evidence="12">
    <location>
        <begin position="14"/>
        <end position="28"/>
    </location>
</feature>
<feature type="strand" evidence="12">
    <location>
        <begin position="35"/>
        <end position="43"/>
    </location>
</feature>
<feature type="strand" evidence="12">
    <location>
        <begin position="48"/>
        <end position="56"/>
    </location>
</feature>
<feature type="strand" evidence="12">
    <location>
        <begin position="59"/>
        <end position="69"/>
    </location>
</feature>
<feature type="helix" evidence="12">
    <location>
        <begin position="70"/>
        <end position="92"/>
    </location>
</feature>
<comment type="function">
    <text evidence="1 3 5 6 7">During stationary phase, promotes and stabilizes dimerization of 70S ribosomes by the ribosome modulation factor (RMF), leading to the formation of inactive 100S ribosomes (PubMed:18174192). Converts immature 90S particles formed by RMF into 100S ribosomes (PubMed:16324148). Crystallization with T.thermophilus 70S ribosomes shows it binds in the channel between the head and body of the 30S subunit, where mRNA, tRNAs, initiation factors IF1 and IF3 and elongation factor G would bind; however RMF is still able to bind (PubMed:22605777). In this crystal binding of HPF induces movement of the 30S head domain away from the rest of the ribosome, presumably so they would more easily form dimers (PubMed:22605777). May also function as a potential translational inhibitor (PubMed:18174192).</text>
</comment>
<comment type="subunit">
    <text evidence="1 7">Associates exclusively with 100S ribosomes, which are dimers of 70S ribosomes.</text>
</comment>
<comment type="interaction">
    <interactant intactId="EBI-561113">
        <id>P0AFX0</id>
    </interactant>
    <interactant intactId="EBI-542385">
        <id>P0A988</id>
        <label>dnaN</label>
    </interactant>
    <organismsDiffer>false</organismsDiffer>
    <experiments>2</experiments>
</comment>
<comment type="induction">
    <text evidence="1 2">Induced during stationary growth phase (at protein level) (PubMed:11168583). Induced by the signal autoinducer AI-2 (PubMed:11514505).</text>
</comment>
<comment type="disruption phenotype">
    <text evidence="3 4 8">Non-essential gene, no formation of inactive 100S ribosomes. Double hpf-yfiA deletion mutants form 90S ribosomes (PubMed:16324148). A quadruple yfiA-hpf-rmf-sra knockout strain is significantly outcompeted by wild-type after 4 days growth (PubMed:17277072). No change in sensitivity to aminoglycoside antiobiotic gentamicin in stationary phase cultures (PubMed:26324267).</text>
</comment>
<comment type="similarity">
    <text evidence="11">Belongs to the HPF/YfiA ribosome-associated protein family. Short HPF subfamily.</text>
</comment>
<reference key="1">
    <citation type="journal article" date="1993" name="J. Bacteriol.">
        <title>Physical map location of the rpoN gene of Escherichia coli.</title>
        <authorList>
            <person name="Imaishi H."/>
            <person name="Gomada M."/>
            <person name="Inouye S."/>
            <person name="Nakazawa A."/>
        </authorList>
    </citation>
    <scope>NUCLEOTIDE SEQUENCE [GENOMIC DNA]</scope>
    <source>
        <strain>K12</strain>
    </source>
</reference>
<reference key="2">
    <citation type="journal article" date="1994" name="Microbiology">
        <title>Molecular analysis of the operon which encodes the RNA polymerase sigma factor sigma 54 of Escherichia coli.</title>
        <authorList>
            <person name="Jones D.H.A."/>
            <person name="Franklin C.F.H."/>
            <person name="Thomas C.M."/>
        </authorList>
    </citation>
    <scope>NUCLEOTIDE SEQUENCE [GENOMIC DNA]</scope>
    <source>
        <strain>K12</strain>
    </source>
</reference>
<reference key="3">
    <citation type="journal article" date="1995" name="J. Biol. Chem.">
        <title>Novel proteins of the phosphotransferase system encoded within the rpoN operon of Escherichia coli. Enzyme IIANtr affects growth on organic nitrogen and the conditional lethality of an erats mutant.</title>
        <authorList>
            <person name="Powell B.S."/>
            <person name="Court D.L."/>
            <person name="Inada T."/>
            <person name="Nakamura Y."/>
            <person name="Michotey V."/>
            <person name="Cui X."/>
            <person name="Reizer A."/>
            <person name="Saier M.H. Jr."/>
            <person name="Reizer J."/>
        </authorList>
    </citation>
    <scope>NUCLEOTIDE SEQUENCE [GENOMIC DNA]</scope>
    <source>
        <strain>K12 / W3110 / ATCC 27325 / DSM 5911</strain>
    </source>
</reference>
<reference key="4">
    <citation type="journal article" date="1997" name="Science">
        <title>The complete genome sequence of Escherichia coli K-12.</title>
        <authorList>
            <person name="Blattner F.R."/>
            <person name="Plunkett G. III"/>
            <person name="Bloch C.A."/>
            <person name="Perna N.T."/>
            <person name="Burland V."/>
            <person name="Riley M."/>
            <person name="Collado-Vides J."/>
            <person name="Glasner J.D."/>
            <person name="Rode C.K."/>
            <person name="Mayhew G.F."/>
            <person name="Gregor J."/>
            <person name="Davis N.W."/>
            <person name="Kirkpatrick H.A."/>
            <person name="Goeden M.A."/>
            <person name="Rose D.J."/>
            <person name="Mau B."/>
            <person name="Shao Y."/>
        </authorList>
    </citation>
    <scope>NUCLEOTIDE SEQUENCE [LARGE SCALE GENOMIC DNA]</scope>
    <source>
        <strain>K12 / MG1655 / ATCC 47076</strain>
    </source>
</reference>
<reference key="5">
    <citation type="journal article" date="2006" name="Mol. Syst. Biol.">
        <title>Highly accurate genome sequences of Escherichia coli K-12 strains MG1655 and W3110.</title>
        <authorList>
            <person name="Hayashi K."/>
            <person name="Morooka N."/>
            <person name="Yamamoto Y."/>
            <person name="Fujita K."/>
            <person name="Isono K."/>
            <person name="Choi S."/>
            <person name="Ohtsubo E."/>
            <person name="Baba T."/>
            <person name="Wanner B.L."/>
            <person name="Mori H."/>
            <person name="Horiuchi T."/>
        </authorList>
    </citation>
    <scope>NUCLEOTIDE SEQUENCE [LARGE SCALE GENOMIC DNA]</scope>
    <source>
        <strain>K12 / W3110 / ATCC 27325 / DSM 5911</strain>
    </source>
</reference>
<reference key="6">
    <citation type="journal article" date="2000" name="Genes Cells">
        <title>Two proteins, YfiA and YhbH, associated with resting ribosomes in stationary phase Escherichia coli.</title>
        <authorList>
            <person name="Maki Y."/>
            <person name="Yoshida H."/>
            <person name="Wada A."/>
        </authorList>
    </citation>
    <scope>PROTEIN SEQUENCE OF 1-12</scope>
    <scope>FUNCTION</scope>
    <scope>INTERACTION WITH 100S RIBOSOMES</scope>
    <scope>INDUCTION</scope>
    <source>
        <strain>K12 / MC4100 / AD202</strain>
    </source>
</reference>
<reference key="7">
    <citation type="journal article" date="1999" name="Electrophoresis">
        <title>Enrichment of low abundance proteins of Escherichia coli by hydroxyapatite chromatography.</title>
        <authorList>
            <person name="Fountoulakis M."/>
            <person name="Takacs M.-F."/>
            <person name="Berndt P."/>
            <person name="Langen H."/>
            <person name="Takacs B."/>
        </authorList>
    </citation>
    <scope>IDENTIFICATION BY MASS SPECTROMETRY</scope>
    <source>
        <strain>B / BL21</strain>
    </source>
</reference>
<reference key="8">
    <citation type="journal article" date="2001" name="J. Bacteriol.">
        <title>DNA microarray-based identification of genes controlled by autoinducer 2-stimulated quorum sensing in Escherichia coli.</title>
        <authorList>
            <person name="DeLisa M.P."/>
            <person name="Wu C.-F."/>
            <person name="Wang L."/>
            <person name="Valdes J.J."/>
            <person name="Bentley W.E."/>
        </authorList>
    </citation>
    <scope>INDUCTION</scope>
</reference>
<reference key="9">
    <citation type="journal article" date="2005" name="Genes Cells">
        <title>Ribosome binding proteins YhbH and YfiA have opposite functions during 100S formation in the stationary phase of Escherichia coli.</title>
        <authorList>
            <person name="Ueta M."/>
            <person name="Yoshida H."/>
            <person name="Wada C."/>
            <person name="Baba T."/>
            <person name="Mori H."/>
            <person name="Wada A."/>
        </authorList>
    </citation>
    <scope>FUNCTION</scope>
    <scope>GENE NAME</scope>
    <scope>DISRUPTION PHENOTYPE</scope>
    <source>
        <strain>K12 / W3110 / ATCC 27325 / DSM 5911</strain>
    </source>
</reference>
<reference key="10">
    <citation type="journal article" date="2007" name="J. Bacteriol.">
        <title>Essentiality of ribosomal and transcription antitermination proteins analyzed by systematic gene replacement in Escherichia coli.</title>
        <authorList>
            <person name="Bubunenko M."/>
            <person name="Baker T."/>
            <person name="Court D.L."/>
        </authorList>
    </citation>
    <scope>DISRUPTION PHENOTYPE</scope>
    <source>
        <strain>K12 / W3110 / ATCC 27325 / DSM 5911</strain>
    </source>
</reference>
<reference key="11">
    <citation type="journal article" date="2008" name="J. Biochem.">
        <title>Role of HPF (hibernation promoting factor) in translational activity in Escherichia coli.</title>
        <authorList>
            <person name="Ueta M."/>
            <person name="Ohniwa R.L."/>
            <person name="Yoshida H."/>
            <person name="Maki Y."/>
            <person name="Wada C."/>
            <person name="Wada A."/>
        </authorList>
    </citation>
    <scope>FUNCTION</scope>
    <source>
        <strain>K12 / W3110 / ATCC 27325 / DSM 5911</strain>
    </source>
</reference>
<reference key="12">
    <citation type="journal article" date="2009" name="Genes Cells">
        <title>Activities of Escherichia coli ribosomes in IF3 and RMF change to prepare 100S ribosome formation on entering the stationary growth phase.</title>
        <authorList>
            <person name="Yoshida H."/>
            <person name="Ueta M."/>
            <person name="Maki Y."/>
            <person name="Sakai A."/>
            <person name="Wada A."/>
        </authorList>
    </citation>
    <scope>FUNCTION</scope>
</reference>
<reference key="13">
    <citation type="journal article" date="2015" name="Antimicrob. Agents Chemother.">
        <title>Ribosome hibernation facilitates tolerance of stationary-phase bacteria to aminoglycosides.</title>
        <authorList>
            <person name="McKay S.L."/>
            <person name="Portnoy D.A."/>
        </authorList>
    </citation>
    <scope>DISRUPTION PHENOTYPE</scope>
    <source>
        <strain>K12 / BW25113</strain>
    </source>
</reference>
<reference key="14">
    <citation type="journal article" date="2009" name="Biochem. Biophys. Res. Commun.">
        <title>Solution structure of the E. coli ribosome hibernation promoting factor HPF: Implications for the relationship between structure and function.</title>
        <authorList>
            <person name="Sato A."/>
            <person name="Watanabe T."/>
            <person name="Maki Y."/>
            <person name="Ueta M."/>
            <person name="Yoshida H."/>
            <person name="Ito Y."/>
            <person name="Wada A."/>
            <person name="Mishima M."/>
        </authorList>
    </citation>
    <scope>STRUCTURE BY NMR</scope>
</reference>
<reference key="15">
    <citation type="journal article" date="2012" name="Science">
        <title>How hibernation factors RMF, HPF, and YfiA turn off protein synthesis.</title>
        <authorList>
            <person name="Polikanov Y.S."/>
            <person name="Blaha G.M."/>
            <person name="Steitz T.A."/>
        </authorList>
    </citation>
    <scope>X-RAY CRYSTALLOGRAPHY (3.10 ANGSTROMS) BOUND TO THE T.THERMOPHILUS 70S RIBOSOME</scope>
    <scope>FUNCTION</scope>
    <scope>SUBUNIT</scope>
</reference>
<sequence>MQLNITGNNVEITEALREFVTAKFAKLEQYFDRINQVYVVLKVEKVTHTSDATLHVNGGEIHASAEGQDMYAAIDGLIDKLARQLTKHKDKLKQH</sequence>